<sequence>MSTATFTLGIVGARGYTGAALITLLTAHPAIELIFVSSREYHGQPVAAHNPTYCGDLRFETLDPAAVAAKRADVVILALPNGNAAPYVHAIDATAPPTLIIDLSADTRFDPDWYYGLPELTRHTYTGQKRISNPGCYATAMQLAIAPLRDQLAGPPQCFGVSGYSGAGTTPSDKNNQALLRDNLMPYALTDHLHEREVSAQLGIPVEFMPHVAPHFRGITLTANLWLQRPLTREHIKTLYATRYANDPLIDIIDPPPWVNQIAARHTVQIGAFTMAPGNKRVVIVATLDNLLKGAATQALQNLNRALGLDELTAIPYQPNPVPSPIP</sequence>
<evidence type="ECO:0000255" key="1">
    <source>
        <dbReference type="HAMAP-Rule" id="MF_00150"/>
    </source>
</evidence>
<reference key="1">
    <citation type="journal article" date="2003" name="J. Bacteriol.">
        <title>Comparative analyses of the complete genome sequences of Pierce's disease and citrus variegated chlorosis strains of Xylella fastidiosa.</title>
        <authorList>
            <person name="Van Sluys M.A."/>
            <person name="de Oliveira M.C."/>
            <person name="Monteiro-Vitorello C.B."/>
            <person name="Miyaki C.Y."/>
            <person name="Furlan L.R."/>
            <person name="Camargo L.E.A."/>
            <person name="da Silva A.C.R."/>
            <person name="Moon D.H."/>
            <person name="Takita M.A."/>
            <person name="Lemos E.G.M."/>
            <person name="Machado M.A."/>
            <person name="Ferro M.I.T."/>
            <person name="da Silva F.R."/>
            <person name="Goldman M.H.S."/>
            <person name="Goldman G.H."/>
            <person name="Lemos M.V.F."/>
            <person name="El-Dorry H."/>
            <person name="Tsai S.M."/>
            <person name="Carrer H."/>
            <person name="Carraro D.M."/>
            <person name="de Oliveira R.C."/>
            <person name="Nunes L.R."/>
            <person name="Siqueira W.J."/>
            <person name="Coutinho L.L."/>
            <person name="Kimura E.T."/>
            <person name="Ferro E.S."/>
            <person name="Harakava R."/>
            <person name="Kuramae E.E."/>
            <person name="Marino C.L."/>
            <person name="Giglioti E."/>
            <person name="Abreu I.L."/>
            <person name="Alves L.M.C."/>
            <person name="do Amaral A.M."/>
            <person name="Baia G.S."/>
            <person name="Blanco S.R."/>
            <person name="Brito M.S."/>
            <person name="Cannavan F.S."/>
            <person name="Celestino A.V."/>
            <person name="da Cunha A.F."/>
            <person name="Fenille R.C."/>
            <person name="Ferro J.A."/>
            <person name="Formighieri E.F."/>
            <person name="Kishi L.T."/>
            <person name="Leoni S.G."/>
            <person name="Oliveira A.R."/>
            <person name="Rosa V.E. Jr."/>
            <person name="Sassaki F.T."/>
            <person name="Sena J.A.D."/>
            <person name="de Souza A.A."/>
            <person name="Truffi D."/>
            <person name="Tsukumo F."/>
            <person name="Yanai G.M."/>
            <person name="Zaros L.G."/>
            <person name="Civerolo E.L."/>
            <person name="Simpson A.J.G."/>
            <person name="Almeida N.F. Jr."/>
            <person name="Setubal J.C."/>
            <person name="Kitajima J.P."/>
        </authorList>
    </citation>
    <scope>NUCLEOTIDE SEQUENCE [LARGE SCALE GENOMIC DNA]</scope>
    <source>
        <strain>Temecula1 / ATCC 700964</strain>
    </source>
</reference>
<organism>
    <name type="scientific">Xylella fastidiosa (strain Temecula1 / ATCC 700964)</name>
    <dbReference type="NCBI Taxonomy" id="183190"/>
    <lineage>
        <taxon>Bacteria</taxon>
        <taxon>Pseudomonadati</taxon>
        <taxon>Pseudomonadota</taxon>
        <taxon>Gammaproteobacteria</taxon>
        <taxon>Lysobacterales</taxon>
        <taxon>Lysobacteraceae</taxon>
        <taxon>Xylella</taxon>
    </lineage>
</organism>
<comment type="function">
    <text evidence="1">Catalyzes the NADPH-dependent reduction of N-acetyl-5-glutamyl phosphate to yield N-acetyl-L-glutamate 5-semialdehyde.</text>
</comment>
<comment type="catalytic activity">
    <reaction evidence="1">
        <text>N-acetyl-L-glutamate 5-semialdehyde + phosphate + NADP(+) = N-acetyl-L-glutamyl 5-phosphate + NADPH + H(+)</text>
        <dbReference type="Rhea" id="RHEA:21588"/>
        <dbReference type="ChEBI" id="CHEBI:15378"/>
        <dbReference type="ChEBI" id="CHEBI:29123"/>
        <dbReference type="ChEBI" id="CHEBI:43474"/>
        <dbReference type="ChEBI" id="CHEBI:57783"/>
        <dbReference type="ChEBI" id="CHEBI:57936"/>
        <dbReference type="ChEBI" id="CHEBI:58349"/>
        <dbReference type="EC" id="1.2.1.38"/>
    </reaction>
</comment>
<comment type="pathway">
    <text evidence="1">Amino-acid biosynthesis; L-arginine biosynthesis; N(2)-acetyl-L-ornithine from L-glutamate: step 3/4.</text>
</comment>
<comment type="subcellular location">
    <subcellularLocation>
        <location evidence="1">Cytoplasm</location>
    </subcellularLocation>
</comment>
<comment type="similarity">
    <text evidence="1">Belongs to the NAGSA dehydrogenase family. Type 1 subfamily.</text>
</comment>
<feature type="chain" id="PRO_0000112479" description="N-acetyl-gamma-glutamyl-phosphate reductase">
    <location>
        <begin position="1"/>
        <end position="327"/>
    </location>
</feature>
<feature type="active site" evidence="1">
    <location>
        <position position="136"/>
    </location>
</feature>
<keyword id="KW-0028">Amino-acid biosynthesis</keyword>
<keyword id="KW-0055">Arginine biosynthesis</keyword>
<keyword id="KW-0963">Cytoplasm</keyword>
<keyword id="KW-0521">NADP</keyword>
<keyword id="KW-0560">Oxidoreductase</keyword>
<keyword id="KW-1185">Reference proteome</keyword>
<protein>
    <recommendedName>
        <fullName evidence="1">N-acetyl-gamma-glutamyl-phosphate reductase</fullName>
        <shortName evidence="1">AGPR</shortName>
        <ecNumber evidence="1">1.2.1.38</ecNumber>
    </recommendedName>
    <alternativeName>
        <fullName evidence="1">N-acetyl-glutamate semialdehyde dehydrogenase</fullName>
        <shortName evidence="1">NAGSA dehydrogenase</shortName>
    </alternativeName>
</protein>
<name>ARGC_XYLFT</name>
<proteinExistence type="inferred from homology"/>
<accession>Q87EL1</accession>
<dbReference type="EC" id="1.2.1.38" evidence="1"/>
<dbReference type="EMBL" id="AE009442">
    <property type="protein sequence ID" value="AAO28179.1"/>
    <property type="molecule type" value="Genomic_DNA"/>
</dbReference>
<dbReference type="RefSeq" id="WP_011097577.1">
    <property type="nucleotide sequence ID" value="NC_004556.1"/>
</dbReference>
<dbReference type="SMR" id="Q87EL1"/>
<dbReference type="GeneID" id="93903996"/>
<dbReference type="KEGG" id="xft:PD_0294"/>
<dbReference type="HOGENOM" id="CLU_006384_3_0_6"/>
<dbReference type="UniPathway" id="UPA00068">
    <property type="reaction ID" value="UER00108"/>
</dbReference>
<dbReference type="Proteomes" id="UP000002516">
    <property type="component" value="Chromosome"/>
</dbReference>
<dbReference type="GO" id="GO:0005737">
    <property type="term" value="C:cytoplasm"/>
    <property type="evidence" value="ECO:0007669"/>
    <property type="project" value="UniProtKB-SubCell"/>
</dbReference>
<dbReference type="GO" id="GO:0003942">
    <property type="term" value="F:N-acetyl-gamma-glutamyl-phosphate reductase activity"/>
    <property type="evidence" value="ECO:0007669"/>
    <property type="project" value="UniProtKB-UniRule"/>
</dbReference>
<dbReference type="GO" id="GO:0051287">
    <property type="term" value="F:NAD binding"/>
    <property type="evidence" value="ECO:0007669"/>
    <property type="project" value="InterPro"/>
</dbReference>
<dbReference type="GO" id="GO:0070401">
    <property type="term" value="F:NADP+ binding"/>
    <property type="evidence" value="ECO:0007669"/>
    <property type="project" value="InterPro"/>
</dbReference>
<dbReference type="GO" id="GO:0006526">
    <property type="term" value="P:L-arginine biosynthetic process"/>
    <property type="evidence" value="ECO:0007669"/>
    <property type="project" value="UniProtKB-UniRule"/>
</dbReference>
<dbReference type="CDD" id="cd23936">
    <property type="entry name" value="AGPR_C_ARG5_6_like"/>
    <property type="match status" value="1"/>
</dbReference>
<dbReference type="CDD" id="cd24149">
    <property type="entry name" value="AGPR_N_ARG5_6_like"/>
    <property type="match status" value="1"/>
</dbReference>
<dbReference type="Gene3D" id="3.30.360.10">
    <property type="entry name" value="Dihydrodipicolinate Reductase, domain 2"/>
    <property type="match status" value="1"/>
</dbReference>
<dbReference type="Gene3D" id="3.40.50.720">
    <property type="entry name" value="NAD(P)-binding Rossmann-like Domain"/>
    <property type="match status" value="1"/>
</dbReference>
<dbReference type="HAMAP" id="MF_00150">
    <property type="entry name" value="ArgC_type1"/>
    <property type="match status" value="1"/>
</dbReference>
<dbReference type="InterPro" id="IPR023013">
    <property type="entry name" value="AGPR_AS"/>
</dbReference>
<dbReference type="InterPro" id="IPR000706">
    <property type="entry name" value="AGPR_type-1"/>
</dbReference>
<dbReference type="InterPro" id="IPR036291">
    <property type="entry name" value="NAD(P)-bd_dom_sf"/>
</dbReference>
<dbReference type="InterPro" id="IPR050085">
    <property type="entry name" value="NAGSA_dehydrogenase"/>
</dbReference>
<dbReference type="InterPro" id="IPR000534">
    <property type="entry name" value="Semialdehyde_DH_NAD-bd"/>
</dbReference>
<dbReference type="NCBIfam" id="TIGR01850">
    <property type="entry name" value="argC"/>
    <property type="match status" value="1"/>
</dbReference>
<dbReference type="PANTHER" id="PTHR32338:SF10">
    <property type="entry name" value="N-ACETYL-GAMMA-GLUTAMYL-PHOSPHATE REDUCTASE, CHLOROPLASTIC-RELATED"/>
    <property type="match status" value="1"/>
</dbReference>
<dbReference type="PANTHER" id="PTHR32338">
    <property type="entry name" value="N-ACETYL-GAMMA-GLUTAMYL-PHOSPHATE REDUCTASE, CHLOROPLASTIC-RELATED-RELATED"/>
    <property type="match status" value="1"/>
</dbReference>
<dbReference type="Pfam" id="PF01118">
    <property type="entry name" value="Semialdhyde_dh"/>
    <property type="match status" value="1"/>
</dbReference>
<dbReference type="Pfam" id="PF22698">
    <property type="entry name" value="Semialdhyde_dhC_1"/>
    <property type="match status" value="1"/>
</dbReference>
<dbReference type="SMART" id="SM00859">
    <property type="entry name" value="Semialdhyde_dh"/>
    <property type="match status" value="1"/>
</dbReference>
<dbReference type="SUPFAM" id="SSF55347">
    <property type="entry name" value="Glyceraldehyde-3-phosphate dehydrogenase-like, C-terminal domain"/>
    <property type="match status" value="1"/>
</dbReference>
<dbReference type="SUPFAM" id="SSF51735">
    <property type="entry name" value="NAD(P)-binding Rossmann-fold domains"/>
    <property type="match status" value="1"/>
</dbReference>
<dbReference type="PROSITE" id="PS01224">
    <property type="entry name" value="ARGC"/>
    <property type="match status" value="1"/>
</dbReference>
<gene>
    <name evidence="1" type="primary">argC</name>
    <name type="ordered locus">PD_0294</name>
</gene>